<protein>
    <recommendedName>
        <fullName>Autophagy-related protein 13</fullName>
    </recommendedName>
</protein>
<keyword id="KW-0002">3D-structure</keyword>
<keyword id="KW-0072">Autophagy</keyword>
<keyword id="KW-0963">Cytoplasm</keyword>
<keyword id="KW-0597">Phosphoprotein</keyword>
<keyword id="KW-0653">Protein transport</keyword>
<keyword id="KW-1185">Reference proteome</keyword>
<keyword id="KW-0813">Transport</keyword>
<proteinExistence type="evidence at protein level"/>
<sequence length="738" mass="83281">MVAEEDIEKQVLQLIDSFFLKTTLLICSTESSRYQSSTENIFLFDDTWFEDHSELVSELPEIISKWSHYDGRKELPPLVVETYLDLRQLNSSHLVRLKDHEGHLWNVCKGTKKQEIVMERWLIELDNSSPTFKSYSEDETDVNELSKQLVLLFRYLLTLIQLLPTTELYQLLIKSYNGPQNEGSSNPITSTGPLVSIRTCVLDGSKPILSKGRIGLSKPIINTYSNALNESNLPAHLDQKKITPVWTKFGLLRVSVSYRRDWKFEINNTNDELFSARHASVSHNSQGPQNQPEQEGQSDQDIGKRQPQFQQQQQPQQQQQQQQQQQRQHQVQTQQQRQIPDRRSLSLSPCTRANSFEPQSWQKKVYPISRPVQPFKVGSIGSQSASRNPSNSSFFNQPPVHRPSMSSNYGPQMNIEGTSVGSTSKYSSSFGNIRRHSSVKTTENAEKVSKAVKSPLQPQESQEDLMDFVKLLEEKPDLTIKKTSGNNPPNINISDSLIRYQNLKPSNDLLSEDLSVSLSMDPNHTYHRGRSDSHSPLPSISPSMHYGSLNSRMSQGANASHLIARGGGNSSTSALNSRRNSLDKSSNKQGMSGLPPIFGGESTSYHHDNKIQKYNQLGVEEDDDDENDRLLNQMGNSATKFKSSISPRSIDSISSSFIKSRIPIRQPYHYSQPTTAPFQAQAKFHKPANKLIDNGNRSNSNNNNHNGNDAVGVMHNDEDDQDDDLVFFMSDMNLSKEG</sequence>
<evidence type="ECO:0000256" key="1">
    <source>
        <dbReference type="SAM" id="MobiDB-lite"/>
    </source>
</evidence>
<evidence type="ECO:0000269" key="2">
    <source>
    </source>
</evidence>
<evidence type="ECO:0000269" key="3">
    <source>
    </source>
</evidence>
<evidence type="ECO:0000269" key="4">
    <source>
    </source>
</evidence>
<evidence type="ECO:0000269" key="5">
    <source>
    </source>
</evidence>
<evidence type="ECO:0000269" key="6">
    <source>
    </source>
</evidence>
<evidence type="ECO:0000269" key="7">
    <source>
    </source>
</evidence>
<evidence type="ECO:0000269" key="8">
    <source>
    </source>
</evidence>
<evidence type="ECO:0000269" key="9">
    <source>
    </source>
</evidence>
<evidence type="ECO:0000269" key="10">
    <source>
    </source>
</evidence>
<evidence type="ECO:0000269" key="11">
    <source>
    </source>
</evidence>
<evidence type="ECO:0000269" key="12">
    <source>
    </source>
</evidence>
<evidence type="ECO:0000269" key="13">
    <source>
    </source>
</evidence>
<evidence type="ECO:0000269" key="14">
    <source>
    </source>
</evidence>
<evidence type="ECO:0000269" key="15">
    <source>
    </source>
</evidence>
<evidence type="ECO:0000269" key="16">
    <source>
    </source>
</evidence>
<evidence type="ECO:0000269" key="17">
    <source>
    </source>
</evidence>
<evidence type="ECO:0000269" key="18">
    <source>
    </source>
</evidence>
<evidence type="ECO:0000269" key="19">
    <source>
    </source>
</evidence>
<evidence type="ECO:0000269" key="20">
    <source>
    </source>
</evidence>
<evidence type="ECO:0000269" key="21">
    <source>
    </source>
</evidence>
<evidence type="ECO:0000269" key="22">
    <source>
    </source>
</evidence>
<evidence type="ECO:0000269" key="23">
    <source>
    </source>
</evidence>
<evidence type="ECO:0000269" key="24">
    <source>
    </source>
</evidence>
<evidence type="ECO:0000269" key="25">
    <source>
    </source>
</evidence>
<evidence type="ECO:0000269" key="26">
    <source>
    </source>
</evidence>
<evidence type="ECO:0000269" key="27">
    <source>
    </source>
</evidence>
<evidence type="ECO:0000269" key="28">
    <source>
    </source>
</evidence>
<evidence type="ECO:0000269" key="29">
    <source>
    </source>
</evidence>
<evidence type="ECO:0000269" key="30">
    <source>
    </source>
</evidence>
<evidence type="ECO:0000269" key="31">
    <source>
    </source>
</evidence>
<evidence type="ECO:0000269" key="32">
    <source>
    </source>
</evidence>
<evidence type="ECO:0000269" key="33">
    <source>
    </source>
</evidence>
<evidence type="ECO:0000269" key="34">
    <source>
    </source>
</evidence>
<evidence type="ECO:0000269" key="35">
    <source>
    </source>
</evidence>
<evidence type="ECO:0000269" key="36">
    <source>
    </source>
</evidence>
<evidence type="ECO:0000269" key="37">
    <source>
    </source>
</evidence>
<evidence type="ECO:0000269" key="38">
    <source>
    </source>
</evidence>
<evidence type="ECO:0000269" key="39">
    <source>
    </source>
</evidence>
<evidence type="ECO:0000305" key="40"/>
<evidence type="ECO:0007744" key="41">
    <source>
        <dbReference type="PDB" id="6KBM"/>
    </source>
</evidence>
<evidence type="ECO:0007744" key="42">
    <source>
        <dbReference type="PDB" id="6KBN"/>
    </source>
</evidence>
<evidence type="ECO:0007744" key="43">
    <source>
    </source>
</evidence>
<evidence type="ECO:0007744" key="44">
    <source>
    </source>
</evidence>
<evidence type="ECO:0007744" key="45">
    <source>
    </source>
</evidence>
<evidence type="ECO:0007744" key="46">
    <source>
    </source>
</evidence>
<dbReference type="EMBL" id="U25842">
    <property type="protein sequence ID" value="AAB68118.1"/>
    <property type="molecule type" value="Genomic_DNA"/>
</dbReference>
<dbReference type="EMBL" id="D88025">
    <property type="protein sequence ID" value="BAA21485.1"/>
    <property type="molecule type" value="Genomic_DNA"/>
</dbReference>
<dbReference type="EMBL" id="BK006949">
    <property type="protein sequence ID" value="DAA11601.1"/>
    <property type="molecule type" value="Genomic_DNA"/>
</dbReference>
<dbReference type="PIR" id="S59842">
    <property type="entry name" value="S59842"/>
</dbReference>
<dbReference type="RefSeq" id="NP_015511.1">
    <property type="nucleotide sequence ID" value="NM_001184282.1"/>
</dbReference>
<dbReference type="PDB" id="6KBM">
    <property type="method" value="X-ray"/>
    <property type="resolution" value="2.90 A"/>
    <property type="chains" value="B=567-695"/>
</dbReference>
<dbReference type="PDB" id="6KBN">
    <property type="method" value="X-ray"/>
    <property type="resolution" value="3.20 A"/>
    <property type="chains" value="B/D=567-695"/>
</dbReference>
<dbReference type="PDBsum" id="6KBM"/>
<dbReference type="PDBsum" id="6KBN"/>
<dbReference type="SMR" id="Q06628"/>
<dbReference type="BioGRID" id="36357">
    <property type="interactions" value="212"/>
</dbReference>
<dbReference type="ComplexPortal" id="CPX-1676">
    <property type="entry name" value="ATG1/ULK1 protein kinase complex"/>
</dbReference>
<dbReference type="DIP" id="DIP-1191N"/>
<dbReference type="FunCoup" id="Q06628">
    <property type="interactions" value="62"/>
</dbReference>
<dbReference type="IntAct" id="Q06628">
    <property type="interactions" value="16"/>
</dbReference>
<dbReference type="MINT" id="Q06628"/>
<dbReference type="STRING" id="4932.YPR185W"/>
<dbReference type="TCDB" id="9.A.15.1.1">
    <property type="family name" value="the autophagy-related phagophore-formation transporter (apt) family"/>
</dbReference>
<dbReference type="iPTMnet" id="Q06628"/>
<dbReference type="PaxDb" id="4932-YPR185W"/>
<dbReference type="PeptideAtlas" id="Q06628"/>
<dbReference type="TopDownProteomics" id="Q06628"/>
<dbReference type="EnsemblFungi" id="YPR185W_mRNA">
    <property type="protein sequence ID" value="YPR185W"/>
    <property type="gene ID" value="YPR185W"/>
</dbReference>
<dbReference type="GeneID" id="856315"/>
<dbReference type="KEGG" id="sce:YPR185W"/>
<dbReference type="AGR" id="SGD:S000006389"/>
<dbReference type="SGD" id="S000006389">
    <property type="gene designation" value="ATG13"/>
</dbReference>
<dbReference type="VEuPathDB" id="FungiDB:YPR185W"/>
<dbReference type="eggNOG" id="KOG4573">
    <property type="taxonomic scope" value="Eukaryota"/>
</dbReference>
<dbReference type="HOGENOM" id="CLU_411076_0_0_1"/>
<dbReference type="InParanoid" id="Q06628"/>
<dbReference type="OMA" id="WNVCKGT"/>
<dbReference type="OrthoDB" id="70161at2759"/>
<dbReference type="BioCyc" id="YEAST:G3O-34308-MONOMER"/>
<dbReference type="Reactome" id="R-SCE-1632852">
    <property type="pathway name" value="Macroautophagy"/>
</dbReference>
<dbReference type="BioGRID-ORCS" id="856315">
    <property type="hits" value="1 hit in 10 CRISPR screens"/>
</dbReference>
<dbReference type="CD-CODE" id="4F15E4D1">
    <property type="entry name" value="ATG condensate"/>
</dbReference>
<dbReference type="PRO" id="PR:Q06628"/>
<dbReference type="Proteomes" id="UP000002311">
    <property type="component" value="Chromosome XVI"/>
</dbReference>
<dbReference type="RNAct" id="Q06628">
    <property type="molecule type" value="protein"/>
</dbReference>
<dbReference type="GO" id="GO:1990316">
    <property type="term" value="C:Atg1/ULK1 kinase complex"/>
    <property type="evidence" value="ECO:0000314"/>
    <property type="project" value="SGD"/>
</dbReference>
<dbReference type="GO" id="GO:0005776">
    <property type="term" value="C:autophagosome"/>
    <property type="evidence" value="ECO:0000318"/>
    <property type="project" value="GO_Central"/>
</dbReference>
<dbReference type="GO" id="GO:0005829">
    <property type="term" value="C:cytosol"/>
    <property type="evidence" value="ECO:0007005"/>
    <property type="project" value="SGD"/>
</dbReference>
<dbReference type="GO" id="GO:0070772">
    <property type="term" value="C:PAS complex"/>
    <property type="evidence" value="ECO:0000314"/>
    <property type="project" value="DisProt"/>
</dbReference>
<dbReference type="GO" id="GO:0000407">
    <property type="term" value="C:phagophore assembly site"/>
    <property type="evidence" value="ECO:0000314"/>
    <property type="project" value="SGD"/>
</dbReference>
<dbReference type="GO" id="GO:0120095">
    <property type="term" value="C:vacuole-isolation membrane contact site"/>
    <property type="evidence" value="ECO:0000314"/>
    <property type="project" value="SGD"/>
</dbReference>
<dbReference type="GO" id="GO:0070016">
    <property type="term" value="F:armadillo repeat domain binding"/>
    <property type="evidence" value="ECO:0000314"/>
    <property type="project" value="SGD"/>
</dbReference>
<dbReference type="GO" id="GO:0008289">
    <property type="term" value="F:lipid binding"/>
    <property type="evidence" value="ECO:0000315"/>
    <property type="project" value="DisProt"/>
</dbReference>
<dbReference type="GO" id="GO:0019887">
    <property type="term" value="F:protein kinase regulator activity"/>
    <property type="evidence" value="ECO:0000314"/>
    <property type="project" value="SGD"/>
</dbReference>
<dbReference type="GO" id="GO:0000045">
    <property type="term" value="P:autophagosome assembly"/>
    <property type="evidence" value="ECO:0000314"/>
    <property type="project" value="SGD"/>
</dbReference>
<dbReference type="GO" id="GO:0006914">
    <property type="term" value="P:autophagy"/>
    <property type="evidence" value="ECO:0000315"/>
    <property type="project" value="UniProtKB"/>
</dbReference>
<dbReference type="GO" id="GO:0000422">
    <property type="term" value="P:autophagy of mitochondrion"/>
    <property type="evidence" value="ECO:0000315"/>
    <property type="project" value="SGD"/>
</dbReference>
<dbReference type="GO" id="GO:0006995">
    <property type="term" value="P:cellular response to nitrogen starvation"/>
    <property type="evidence" value="ECO:0000315"/>
    <property type="project" value="SGD"/>
</dbReference>
<dbReference type="GO" id="GO:0071255">
    <property type="term" value="P:Cvt vesicle assembly"/>
    <property type="evidence" value="ECO:0000315"/>
    <property type="project" value="SGD"/>
</dbReference>
<dbReference type="GO" id="GO:0032258">
    <property type="term" value="P:cytoplasm to vacuole targeting by the Cvt pathway"/>
    <property type="evidence" value="ECO:0000315"/>
    <property type="project" value="SGD"/>
</dbReference>
<dbReference type="GO" id="GO:0016236">
    <property type="term" value="P:macroautophagy"/>
    <property type="evidence" value="ECO:0000315"/>
    <property type="project" value="SGD"/>
</dbReference>
<dbReference type="GO" id="GO:0000423">
    <property type="term" value="P:mitophagy"/>
    <property type="evidence" value="ECO:0000318"/>
    <property type="project" value="GO_Central"/>
</dbReference>
<dbReference type="GO" id="GO:0044804">
    <property type="term" value="P:nucleophagy"/>
    <property type="evidence" value="ECO:0000315"/>
    <property type="project" value="SGD"/>
</dbReference>
<dbReference type="GO" id="GO:0034727">
    <property type="term" value="P:piecemeal microautophagy of the nucleus"/>
    <property type="evidence" value="ECO:0000315"/>
    <property type="project" value="SGD"/>
</dbReference>
<dbReference type="GO" id="GO:0010508">
    <property type="term" value="P:positive regulation of autophagy"/>
    <property type="evidence" value="ECO:0000314"/>
    <property type="project" value="DisProt"/>
</dbReference>
<dbReference type="GO" id="GO:0034497">
    <property type="term" value="P:protein localization to phagophore assembly site"/>
    <property type="evidence" value="ECO:0000316"/>
    <property type="project" value="SGD"/>
</dbReference>
<dbReference type="GO" id="GO:0071211">
    <property type="term" value="P:protein targeting to vacuole involved in autophagy"/>
    <property type="evidence" value="ECO:0000315"/>
    <property type="project" value="SGD"/>
</dbReference>
<dbReference type="GO" id="GO:0060341">
    <property type="term" value="P:regulation of cellular localization"/>
    <property type="evidence" value="ECO:0000314"/>
    <property type="project" value="DisProt"/>
</dbReference>
<dbReference type="GO" id="GO:0042594">
    <property type="term" value="P:response to starvation"/>
    <property type="evidence" value="ECO:0000303"/>
    <property type="project" value="ComplexPortal"/>
</dbReference>
<dbReference type="DisProt" id="DP01732"/>
<dbReference type="FunFam" id="3.30.900.10:FF:000013">
    <property type="entry name" value="Autophagy-related protein 13"/>
    <property type="match status" value="1"/>
</dbReference>
<dbReference type="Gene3D" id="6.10.140.1900">
    <property type="match status" value="1"/>
</dbReference>
<dbReference type="Gene3D" id="3.30.900.10">
    <property type="entry name" value="HORMA domain"/>
    <property type="match status" value="1"/>
</dbReference>
<dbReference type="InterPro" id="IPR040182">
    <property type="entry name" value="ATG13"/>
</dbReference>
<dbReference type="InterPro" id="IPR018731">
    <property type="entry name" value="Atg13_N"/>
</dbReference>
<dbReference type="InterPro" id="IPR036570">
    <property type="entry name" value="HORMA_dom_sf"/>
</dbReference>
<dbReference type="PANTHER" id="PTHR13430">
    <property type="match status" value="1"/>
</dbReference>
<dbReference type="PANTHER" id="PTHR13430:SF4">
    <property type="entry name" value="AUTOPHAGY-RELATED PROTEIN 13"/>
    <property type="match status" value="1"/>
</dbReference>
<dbReference type="Pfam" id="PF10033">
    <property type="entry name" value="ATG13"/>
    <property type="match status" value="1"/>
</dbReference>
<organism>
    <name type="scientific">Saccharomyces cerevisiae (strain ATCC 204508 / S288c)</name>
    <name type="common">Baker's yeast</name>
    <dbReference type="NCBI Taxonomy" id="559292"/>
    <lineage>
        <taxon>Eukaryota</taxon>
        <taxon>Fungi</taxon>
        <taxon>Dikarya</taxon>
        <taxon>Ascomycota</taxon>
        <taxon>Saccharomycotina</taxon>
        <taxon>Saccharomycetes</taxon>
        <taxon>Saccharomycetales</taxon>
        <taxon>Saccharomycetaceae</taxon>
        <taxon>Saccharomyces</taxon>
    </lineage>
</organism>
<feature type="chain" id="PRO_0000157972" description="Autophagy-related protein 13">
    <location>
        <begin position="1"/>
        <end position="738"/>
    </location>
</feature>
<feature type="region of interest" description="Disordered" evidence="1">
    <location>
        <begin position="279"/>
        <end position="359"/>
    </location>
</feature>
<feature type="region of interest" description="Disordered" evidence="1">
    <location>
        <begin position="377"/>
        <end position="462"/>
    </location>
</feature>
<feature type="region of interest" description="Interaction with ATG1">
    <location>
        <begin position="432"/>
        <end position="520"/>
    </location>
</feature>
<feature type="region of interest" description="Disordered" evidence="1">
    <location>
        <begin position="521"/>
        <end position="599"/>
    </location>
</feature>
<feature type="region of interest" description="Disordered" evidence="1">
    <location>
        <begin position="690"/>
        <end position="719"/>
    </location>
</feature>
<feature type="compositionally biased region" description="Low complexity" evidence="1">
    <location>
        <begin position="284"/>
        <end position="297"/>
    </location>
</feature>
<feature type="compositionally biased region" description="Low complexity" evidence="1">
    <location>
        <begin position="306"/>
        <end position="338"/>
    </location>
</feature>
<feature type="compositionally biased region" description="Polar residues" evidence="1">
    <location>
        <begin position="345"/>
        <end position="359"/>
    </location>
</feature>
<feature type="compositionally biased region" description="Low complexity" evidence="1">
    <location>
        <begin position="382"/>
        <end position="399"/>
    </location>
</feature>
<feature type="compositionally biased region" description="Low complexity" evidence="1">
    <location>
        <begin position="417"/>
        <end position="429"/>
    </location>
</feature>
<feature type="compositionally biased region" description="Polar residues" evidence="1">
    <location>
        <begin position="534"/>
        <end position="558"/>
    </location>
</feature>
<feature type="compositionally biased region" description="Polar residues" evidence="1">
    <location>
        <begin position="570"/>
        <end position="579"/>
    </location>
</feature>
<feature type="compositionally biased region" description="Low complexity" evidence="1">
    <location>
        <begin position="694"/>
        <end position="708"/>
    </location>
</feature>
<feature type="modified residue" description="Phosphoserine; by PKA" evidence="18">
    <location>
        <position position="344"/>
    </location>
</feature>
<feature type="modified residue" description="Phosphoserine; by TORC1" evidence="19">
    <location>
        <position position="348"/>
    </location>
</feature>
<feature type="modified residue" description="Phosphoserine" evidence="44 45 46">
    <location>
        <position position="355"/>
    </location>
</feature>
<feature type="modified residue" description="Phosphoserine; by TORC1 and PKA" evidence="18 19">
    <location>
        <position position="437"/>
    </location>
</feature>
<feature type="modified residue" description="Phosphoserine; by TORC1" evidence="19">
    <location>
        <position position="438"/>
    </location>
</feature>
<feature type="modified residue" description="Phosphoserine" evidence="45 46">
    <location>
        <position position="461"/>
    </location>
</feature>
<feature type="modified residue" description="Phosphoserine; by TORC1" evidence="19">
    <location>
        <position position="496"/>
    </location>
</feature>
<feature type="modified residue" description="Phosphoserine; by TORC1" evidence="19">
    <location>
        <position position="535"/>
    </location>
</feature>
<feature type="modified residue" description="Phosphoserine; by TORC1" evidence="19">
    <location>
        <position position="541"/>
    </location>
</feature>
<feature type="modified residue" description="Phosphoserine" evidence="45">
    <location>
        <position position="554"/>
    </location>
</feature>
<feature type="modified residue" description="Phosphoserine; by PKA" evidence="18">
    <location>
        <position position="581"/>
    </location>
</feature>
<feature type="modified residue" description="Phosphoserine; by TORC1" evidence="19">
    <location>
        <position position="646"/>
    </location>
</feature>
<feature type="modified residue" description="Phosphoserine; by TORC1" evidence="19 43 45 46">
    <location>
        <position position="649"/>
    </location>
</feature>
<feature type="mutagenesis site" description="Decreases phosphorylation by PKA." evidence="18">
    <original>S</original>
    <variation>A</variation>
    <location>
        <position position="344"/>
    </location>
</feature>
<feature type="mutagenesis site" description="Leads to constitutive activation of autophagy; when associated with A-437; A-438; A-496; A-535; A-541; A-646 and A-649." evidence="19">
    <original>S</original>
    <variation>A</variation>
    <location>
        <position position="348"/>
    </location>
</feature>
<feature type="mutagenesis site" description="Decreases phosphorylation by PKA. Leads to constitutive activation of autophagy; when associated with A-348; A-438; A-496; A-535; A-541; A-646 and A-649." evidence="18 19">
    <original>S</original>
    <variation>A</variation>
    <location>
        <position position="437"/>
    </location>
</feature>
<feature type="mutagenesis site" description="Leads to constitutive activation of autophagy; when associated with A-348; A-437; A-496; A-535; A-541; A-646 and A-649." evidence="19">
    <original>S</original>
    <variation>A</variation>
    <location>
        <position position="438"/>
    </location>
</feature>
<feature type="mutagenesis site" description="Impairs binding to ATG1; when associated with A-469." evidence="33">
    <original>F</original>
    <variation>A</variation>
    <location>
        <position position="468"/>
    </location>
</feature>
<feature type="mutagenesis site" description="Impairs binding to ATG1; when associated with A-468." evidence="33">
    <original>V</original>
    <variation>A</variation>
    <location>
        <position position="469"/>
    </location>
</feature>
<feature type="mutagenesis site" description="Leads to constitutive activation of autophagy; when associated with A-348; A-437; A-438; A-535; A-541; A-646 and A-649." evidence="19">
    <original>S</original>
    <variation>A</variation>
    <location>
        <position position="496"/>
    </location>
</feature>
<feature type="mutagenesis site" description="Leads to constitutive activation of autophagy; when associated with A-348; A-437; A-438; A-496; A-541; A-646 and A-649." evidence="19">
    <original>S</original>
    <variation>A</variation>
    <location>
        <position position="535"/>
    </location>
</feature>
<feature type="mutagenesis site" description="Leads to constitutive activation of autophagy; when associated with A-348; A-437; A-438; A-496; A-535; A-646 and A-649." evidence="19">
    <original>S</original>
    <variation>A</variation>
    <location>
        <position position="541"/>
    </location>
</feature>
<feature type="mutagenesis site" description="Decreases phosphorylation by PKA." evidence="18">
    <original>S</original>
    <variation>A</variation>
    <location>
        <position position="581"/>
    </location>
</feature>
<feature type="mutagenesis site" description="Leads to constitutive activation of autophagy; when associated with A-348; A-437; A-438; A-496; A-535; A-541 and A-649." evidence="19">
    <original>S</original>
    <variation>A</variation>
    <location>
        <position position="646"/>
    </location>
</feature>
<feature type="mutagenesis site" description="Leads to constitutive activation of autophagy; when associated with A-348; A-437; A-438; A-496; A-535; A-541, and A-646." evidence="19">
    <original>S</original>
    <variation>A</variation>
    <location>
        <position position="649"/>
    </location>
</feature>
<reference key="1">
    <citation type="journal article" date="1997" name="Gene">
        <title>Analyses of APG13 gene involved in autophagy in yeast, Saccharomyces cerevisiae.</title>
        <authorList>
            <person name="Funakoshi T."/>
            <person name="Matsuura A."/>
            <person name="Noda T."/>
            <person name="Ohsumi Y."/>
        </authorList>
    </citation>
    <scope>NUCLEOTIDE SEQUENCE [GENOMIC DNA]</scope>
</reference>
<reference key="2">
    <citation type="journal article" date="1997" name="Nature">
        <title>The nucleotide sequence of Saccharomyces cerevisiae chromosome XVI.</title>
        <authorList>
            <person name="Bussey H."/>
            <person name="Storms R.K."/>
            <person name="Ahmed A."/>
            <person name="Albermann K."/>
            <person name="Allen E."/>
            <person name="Ansorge W."/>
            <person name="Araujo R."/>
            <person name="Aparicio A."/>
            <person name="Barrell B.G."/>
            <person name="Badcock K."/>
            <person name="Benes V."/>
            <person name="Botstein D."/>
            <person name="Bowman S."/>
            <person name="Brueckner M."/>
            <person name="Carpenter J."/>
            <person name="Cherry J.M."/>
            <person name="Chung E."/>
            <person name="Churcher C.M."/>
            <person name="Coster F."/>
            <person name="Davis K."/>
            <person name="Davis R.W."/>
            <person name="Dietrich F.S."/>
            <person name="Delius H."/>
            <person name="DiPaolo T."/>
            <person name="Dubois E."/>
            <person name="Duesterhoeft A."/>
            <person name="Duncan M."/>
            <person name="Floeth M."/>
            <person name="Fortin N."/>
            <person name="Friesen J.D."/>
            <person name="Fritz C."/>
            <person name="Goffeau A."/>
            <person name="Hall J."/>
            <person name="Hebling U."/>
            <person name="Heumann K."/>
            <person name="Hilbert H."/>
            <person name="Hillier L.W."/>
            <person name="Hunicke-Smith S."/>
            <person name="Hyman R.W."/>
            <person name="Johnston M."/>
            <person name="Kalman S."/>
            <person name="Kleine K."/>
            <person name="Komp C."/>
            <person name="Kurdi O."/>
            <person name="Lashkari D."/>
            <person name="Lew H."/>
            <person name="Lin A."/>
            <person name="Lin D."/>
            <person name="Louis E.J."/>
            <person name="Marathe R."/>
            <person name="Messenguy F."/>
            <person name="Mewes H.-W."/>
            <person name="Mirtipati S."/>
            <person name="Moestl D."/>
            <person name="Mueller-Auer S."/>
            <person name="Namath A."/>
            <person name="Nentwich U."/>
            <person name="Oefner P."/>
            <person name="Pearson D."/>
            <person name="Petel F.X."/>
            <person name="Pohl T.M."/>
            <person name="Purnelle B."/>
            <person name="Rajandream M.A."/>
            <person name="Rechmann S."/>
            <person name="Rieger M."/>
            <person name="Riles L."/>
            <person name="Roberts D."/>
            <person name="Schaefer M."/>
            <person name="Scharfe M."/>
            <person name="Scherens B."/>
            <person name="Schramm S."/>
            <person name="Schroeder M."/>
            <person name="Sdicu A.-M."/>
            <person name="Tettelin H."/>
            <person name="Urrestarazu L.A."/>
            <person name="Ushinsky S."/>
            <person name="Vierendeels F."/>
            <person name="Vissers S."/>
            <person name="Voss H."/>
            <person name="Walsh S.V."/>
            <person name="Wambutt R."/>
            <person name="Wang Y."/>
            <person name="Wedler E."/>
            <person name="Wedler H."/>
            <person name="Winnett E."/>
            <person name="Zhong W.-W."/>
            <person name="Zollner A."/>
            <person name="Vo D.H."/>
            <person name="Hani J."/>
        </authorList>
    </citation>
    <scope>NUCLEOTIDE SEQUENCE [LARGE SCALE GENOMIC DNA]</scope>
    <source>
        <strain>ATCC 204508 / S288c</strain>
    </source>
</reference>
<reference key="3">
    <citation type="journal article" date="2014" name="G3 (Bethesda)">
        <title>The reference genome sequence of Saccharomyces cerevisiae: Then and now.</title>
        <authorList>
            <person name="Engel S.R."/>
            <person name="Dietrich F.S."/>
            <person name="Fisk D.G."/>
            <person name="Binkley G."/>
            <person name="Balakrishnan R."/>
            <person name="Costanzo M.C."/>
            <person name="Dwight S.S."/>
            <person name="Hitz B.C."/>
            <person name="Karra K."/>
            <person name="Nash R.S."/>
            <person name="Weng S."/>
            <person name="Wong E.D."/>
            <person name="Lloyd P."/>
            <person name="Skrzypek M.S."/>
            <person name="Miyasato S.R."/>
            <person name="Simison M."/>
            <person name="Cherry J.M."/>
        </authorList>
    </citation>
    <scope>GENOME REANNOTATION</scope>
    <source>
        <strain>ATCC 204508 / S288c</strain>
    </source>
</reference>
<reference key="4">
    <citation type="journal article" date="1993" name="FEBS Lett.">
        <title>Isolation and characterization of autophagy-defective mutants of Saccharomyces cerevisiae.</title>
        <authorList>
            <person name="Tsukada M."/>
            <person name="Ohsumi Y."/>
        </authorList>
    </citation>
    <scope>FUNCTION</scope>
</reference>
<reference key="5">
    <citation type="journal article" date="2000" name="J. Biol. Chem.">
        <title>Apg13p and Vac8p are part of a complex of phosphoproteins that are required for cytoplasm to vacuole targeting.</title>
        <authorList>
            <person name="Scott S.V."/>
            <person name="Nice D.C. III"/>
            <person name="Nau J.J."/>
            <person name="Weisman L.S."/>
            <person name="Kamada Y."/>
            <person name="Keizer-Gunnink I."/>
            <person name="Funakoshi T."/>
            <person name="Veenhuis M."/>
            <person name="Ohsumi Y."/>
            <person name="Klionsky D.J."/>
        </authorList>
    </citation>
    <scope>FUNCTION</scope>
    <scope>INTERACTION WITH VAC8</scope>
    <scope>PHOSPHORYLATION</scope>
</reference>
<reference key="6">
    <citation type="journal article" date="2000" name="J. Cell Biol.">
        <title>Dissection of autophagosome biogenesis into distinct nucleation and expansion steps.</title>
        <authorList>
            <person name="Abeliovich H."/>
            <person name="Dunn W.A. Jr."/>
            <person name="Kim J."/>
            <person name="Klionsky D.J."/>
        </authorList>
    </citation>
    <scope>FUNCTION</scope>
</reference>
<reference key="7">
    <citation type="journal article" date="2000" name="J. Cell Biol.">
        <title>Tor-mediated induction of autophagy via an Apg1 protein kinase complex.</title>
        <authorList>
            <person name="Kamada Y."/>
            <person name="Funakoshi T."/>
            <person name="Shintani T."/>
            <person name="Nagano K."/>
            <person name="Ohsumi M."/>
            <person name="Ohsumi Y."/>
        </authorList>
    </citation>
    <scope>FUNCTION</scope>
    <scope>PHOSPHORYLATION</scope>
    <scope>INTERACTION WITH ATG1</scope>
</reference>
<reference key="8">
    <citation type="journal article" date="2001" name="Mol. Cell. Biol.">
        <title>Antagonistic controls of autophagy and glycogen accumulation by Snf1p, the yeast homolog of AMP-activated protein kinase, and the cyclin-dependent kinase Pho85p.</title>
        <authorList>
            <person name="Wang Z."/>
            <person name="Wilson W.A."/>
            <person name="Fujino M.A."/>
            <person name="Roach P.J."/>
        </authorList>
    </citation>
    <scope>FUNCTION</scope>
</reference>
<reference key="9">
    <citation type="journal article" date="2003" name="Dev. Cell">
        <title>A unified nomenclature for yeast autophagy-related genes.</title>
        <authorList>
            <person name="Klionsky D.J."/>
            <person name="Cregg J.M."/>
            <person name="Dunn W.A. Jr."/>
            <person name="Emr S.D."/>
            <person name="Sakai Y."/>
            <person name="Sandoval I.V."/>
            <person name="Sibirny A."/>
            <person name="Subramani S."/>
            <person name="Thumm M."/>
            <person name="Veenhuis M."/>
            <person name="Ohsumi Y."/>
        </authorList>
    </citation>
    <scope>NOMENCLATURE</scope>
</reference>
<reference key="10">
    <citation type="journal article" date="2003" name="Nature">
        <title>Global analysis of protein localization in budding yeast.</title>
        <authorList>
            <person name="Huh W.-K."/>
            <person name="Falvo J.V."/>
            <person name="Gerke L.C."/>
            <person name="Carroll A.S."/>
            <person name="Howson R.W."/>
            <person name="Weissman J.S."/>
            <person name="O'Shea E.K."/>
        </authorList>
    </citation>
    <scope>SUBCELLULAR LOCATION [LARGE SCALE ANALYSIS]</scope>
</reference>
<reference key="11">
    <citation type="journal article" date="2003" name="Nature">
        <title>Global analysis of protein expression in yeast.</title>
        <authorList>
            <person name="Ghaemmaghami S."/>
            <person name="Huh W.-K."/>
            <person name="Bower K."/>
            <person name="Howson R.W."/>
            <person name="Belle A."/>
            <person name="Dephoure N."/>
            <person name="O'Shea E.K."/>
            <person name="Weissman J.S."/>
        </authorList>
    </citation>
    <scope>LEVEL OF PROTEIN EXPRESSION [LARGE SCALE ANALYSIS]</scope>
</reference>
<reference key="12">
    <citation type="journal article" date="2004" name="Dev. Cell">
        <title>The Atg1-Atg13 complex regulates Atg9 and Atg23 retrieval transport from the pre-autophagosomal structure.</title>
        <authorList>
            <person name="Reggiori F."/>
            <person name="Tucker K.A."/>
            <person name="Stromhaug P.E."/>
            <person name="Klionsky D.J."/>
        </authorList>
    </citation>
    <scope>FUNCTION</scope>
</reference>
<reference key="13">
    <citation type="journal article" date="2005" name="Mol. Biol. Cell">
        <title>Atg17 functions in cooperation with Atg1 and Atg13 in yeast autophagy.</title>
        <authorList>
            <person name="Kabeya Y."/>
            <person name="Kamada Y."/>
            <person name="Baba M."/>
            <person name="Takikawa H."/>
            <person name="Sasaki M."/>
            <person name="Ohsumi Y."/>
        </authorList>
    </citation>
    <scope>FUNCTION</scope>
    <scope>INTERACTION WITH ATG1 AND ATG17</scope>
</reference>
<reference key="14">
    <citation type="journal article" date="2005" name="Mol. Biol. Cell">
        <title>Atg17 regulates the magnitude of the autophagic response.</title>
        <authorList>
            <person name="Cheong H."/>
            <person name="Yorimitsu T."/>
            <person name="Reggiori F."/>
            <person name="Legakis J.E."/>
            <person name="Wang C.W."/>
            <person name="Klionsky D.J."/>
        </authorList>
    </citation>
    <scope>INTERACTION WITH ATG1 AND ATG17</scope>
</reference>
<reference key="15">
    <citation type="journal article" date="2005" name="Mol. Cell. Proteomics">
        <title>Quantitative phosphoproteomics applied to the yeast pheromone signaling pathway.</title>
        <authorList>
            <person name="Gruhler A."/>
            <person name="Olsen J.V."/>
            <person name="Mohammed S."/>
            <person name="Mortensen P."/>
            <person name="Faergeman N.J."/>
            <person name="Mann M."/>
            <person name="Jensen O.N."/>
        </authorList>
    </citation>
    <scope>PHOSPHORYLATION [LARGE SCALE ANALYSIS] AT SER-649</scope>
    <scope>IDENTIFICATION BY MASS SPECTROMETRY [LARGE SCALE ANALYSIS]</scope>
    <source>
        <strain>YAL6B</strain>
    </source>
</reference>
<reference key="16">
    <citation type="journal article" date="2007" name="Autophagy">
        <title>A cycling protein complex required for selective autophagy.</title>
        <authorList>
            <person name="Legakis J.E."/>
            <person name="Yen W.L."/>
            <person name="Klionsky D.J."/>
        </authorList>
    </citation>
    <scope>FUNCTION</scope>
</reference>
<reference key="17">
    <citation type="journal article" date="2007" name="Genes Cells">
        <title>Hierarchy of Atg proteins in pre-autophagosomal structure organization.</title>
        <authorList>
            <person name="Suzuki K."/>
            <person name="Kubota Y."/>
            <person name="Sekito T."/>
            <person name="Ohsumi Y."/>
        </authorList>
    </citation>
    <scope>FUNCTION</scope>
    <scope>SUBCELLULAR LOCATION</scope>
</reference>
<reference key="18">
    <citation type="journal article" date="2007" name="J. Proteome Res.">
        <title>Large-scale phosphorylation analysis of alpha-factor-arrested Saccharomyces cerevisiae.</title>
        <authorList>
            <person name="Li X."/>
            <person name="Gerber S.A."/>
            <person name="Rudner A.D."/>
            <person name="Beausoleil S.A."/>
            <person name="Haas W."/>
            <person name="Villen J."/>
            <person name="Elias J.E."/>
            <person name="Gygi S.P."/>
        </authorList>
    </citation>
    <scope>PHOSPHORYLATION [LARGE SCALE ANALYSIS] AT SER-355</scope>
    <scope>IDENTIFICATION BY MASS SPECTROMETRY [LARGE SCALE ANALYSIS]</scope>
    <source>
        <strain>ADR376</strain>
    </source>
</reference>
<reference key="19">
    <citation type="journal article" date="2007" name="Mol. Biol. Cell">
        <title>Protein kinase A and Sch9 cooperatively regulate induction of autophagy in Saccharomyces cerevisiae.</title>
        <authorList>
            <person name="Yorimitsu T."/>
            <person name="Zaman S."/>
            <person name="Broach J.R."/>
            <person name="Klionsky D.J."/>
        </authorList>
    </citation>
    <scope>FUNCTION</scope>
    <scope>PHOSPHORYLATION</scope>
</reference>
<reference key="20">
    <citation type="journal article" date="2008" name="Mol. Biol. Cell">
        <title>The Atg1 kinase complex is involved in the regulation of protein recruitment to initiate sequestering vesicle formation for nonspecific autophagy in Saccharomyces cerevisiae.</title>
        <authorList>
            <person name="Cheong H."/>
            <person name="Nair U."/>
            <person name="Geng J."/>
            <person name="Klionsky D.J."/>
        </authorList>
    </citation>
    <scope>FUNCTION</scope>
</reference>
<reference key="21">
    <citation type="journal article" date="2008" name="Mol. Biol. Cell">
        <title>Organization of the pre-autophagosomal structure responsible for autophagosome formation.</title>
        <authorList>
            <person name="Kawamata T."/>
            <person name="Kamada Y."/>
            <person name="Kabeya Y."/>
            <person name="Sekito T."/>
            <person name="Ohsumi Y."/>
        </authorList>
    </citation>
    <scope>FUNCTION OF THE ATG1-ATG13 COMPLEX</scope>
</reference>
<reference key="22">
    <citation type="journal article" date="2008" name="Mol. Biol. Cell">
        <title>Self-interaction is critical for Atg9 transport and function at the phagophore assembly site during autophagy.</title>
        <authorList>
            <person name="He C."/>
            <person name="Baba M."/>
            <person name="Cao Y."/>
            <person name="Klionsky D.J."/>
        </authorList>
    </citation>
    <scope>INTERACTION WITH ATG1</scope>
</reference>
<reference key="23">
    <citation type="journal article" date="2008" name="Mol. Cell. Proteomics">
        <title>A multidimensional chromatography technology for in-depth phosphoproteome analysis.</title>
        <authorList>
            <person name="Albuquerque C.P."/>
            <person name="Smolka M.B."/>
            <person name="Payne S.H."/>
            <person name="Bafna V."/>
            <person name="Eng J."/>
            <person name="Zhou H."/>
        </authorList>
    </citation>
    <scope>PHOSPHORYLATION [LARGE SCALE ANALYSIS] AT SER-355; SER-461; SER-554 AND SER-649</scope>
    <scope>IDENTIFICATION BY MASS SPECTROMETRY [LARGE SCALE ANALYSIS]</scope>
</reference>
<reference key="24">
    <citation type="journal article" date="2009" name="Biochem. Biophys. Res. Commun.">
        <title>Characterization of the Atg17-Atg29-Atg31 complex specifically required for starvation-induced autophagy in Saccharomyces cerevisiae.</title>
        <authorList>
            <person name="Kabeya Y."/>
            <person name="Noda N.N."/>
            <person name="Fujioka Y."/>
            <person name="Suzuki K."/>
            <person name="Inagaki F."/>
            <person name="Ohsumi Y."/>
        </authorList>
    </citation>
    <scope>INTERACTION WITH THE ATG17-ATG29-ATG31 COMPLEX</scope>
</reference>
<reference key="25">
    <citation type="journal article" date="2009" name="Proc. Natl. Acad. Sci. U.S.A.">
        <title>The Tor and PKA signaling pathways independently target the Atg1/Atg13 protein kinase complex to control autophagy.</title>
        <authorList>
            <person name="Stephan J.S."/>
            <person name="Yeh Y.Y."/>
            <person name="Ramachandran V."/>
            <person name="Deminoff S.J."/>
            <person name="Herman P.K."/>
        </authorList>
    </citation>
    <scope>PHOSPHORYLATION AT SER-344; SER-437 AND SER-581 BY PKA</scope>
    <scope>MUTAGENESIS OF SER-344; SER-437 AND SER-581</scope>
    <scope>FUNCTION</scope>
    <scope>INTERACTION WITH ATG17</scope>
</reference>
<reference key="26">
    <citation type="journal article" date="2009" name="Science">
        <title>Global analysis of Cdk1 substrate phosphorylation sites provides insights into evolution.</title>
        <authorList>
            <person name="Holt L.J."/>
            <person name="Tuch B.B."/>
            <person name="Villen J."/>
            <person name="Johnson A.D."/>
            <person name="Gygi S.P."/>
            <person name="Morgan D.O."/>
        </authorList>
    </citation>
    <scope>PHOSPHORYLATION [LARGE SCALE ANALYSIS] AT SER-355; SER-461 AND SER-649</scope>
    <scope>IDENTIFICATION BY MASS SPECTROMETRY [LARGE SCALE ANALYSIS]</scope>
</reference>
<reference key="27">
    <citation type="journal article" date="2010" name="Autophagy">
        <title>Induction of autophagic flux by amino acid deprivation is distinct from nitrogen starvation-induced macroautophagy.</title>
        <authorList>
            <person name="Ecker N."/>
            <person name="Mor A."/>
            <person name="Journo D."/>
            <person name="Abeliovich H."/>
        </authorList>
    </citation>
    <scope>FUNCTION</scope>
</reference>
<reference key="28">
    <citation type="journal article" date="2010" name="Autophagy">
        <title>Activation of Atg1 kinase in autophagy by regulated phosphorylation.</title>
        <authorList>
            <person name="Kijanska M."/>
            <person name="Dohnal I."/>
            <person name="Reiter W."/>
            <person name="Kaspar S."/>
            <person name="Stoffel I."/>
            <person name="Ammerer G."/>
            <person name="Kraft C."/>
            <person name="Peter M."/>
        </authorList>
    </citation>
    <scope>INTERACTION WITH ATG1</scope>
</reference>
<reference key="29">
    <citation type="journal article" date="2010" name="Genetics">
        <title>Autophosphorylation within the Atg1 activation loop is required for both kinase activity and the induction of autophagy in Saccharomyces cerevisiae.</title>
        <authorList>
            <person name="Yeh Y.Y."/>
            <person name="Wrasman K."/>
            <person name="Herman P.K."/>
        </authorList>
    </citation>
    <scope>FUNCTION</scope>
    <scope>INTERACTION WITH ATG1</scope>
</reference>
<reference key="30">
    <citation type="journal article" date="2010" name="J. Cell Biol.">
        <title>An Atg9-containing compartment that functions in the early steps of autophagosome biogenesis.</title>
        <authorList>
            <person name="Mari M."/>
            <person name="Griffith J."/>
            <person name="Rieter E."/>
            <person name="Krishnappa L."/>
            <person name="Klionsky D.J."/>
            <person name="Reggiori F."/>
        </authorList>
    </citation>
    <scope>FUNCTION</scope>
</reference>
<reference key="31">
    <citation type="journal article" date="2010" name="Mol. Cell. Biol.">
        <title>Tor directly controls the Atg1 kinase complex to regulate autophagy.</title>
        <authorList>
            <person name="Kamada Y."/>
            <person name="Yoshino K."/>
            <person name="Kondo C."/>
            <person name="Kawamata T."/>
            <person name="Oshiro N."/>
            <person name="Yonezawa K."/>
            <person name="Ohsumi Y."/>
        </authorList>
    </citation>
    <scope>PHOSPHORYLATION AT SER-348; SER-437; SER-438; SER-496; SER-535; SER-541; SER-646 AND SER-649</scope>
    <scope>MUTAGENESIS OF SER-348; SER-437; SER-438; SER-496; SER-535; SER-541; SER-646 AND SER-649</scope>
    <scope>FUNCTION</scope>
</reference>
<reference key="32">
    <citation type="journal article" date="2011" name="Autophagy">
        <title>Bidirectional regulation between TORC1 and autophagy in Saccharomyces cerevisiae.</title>
        <authorList>
            <person name="Shin C.S."/>
            <person name="Huh W.K."/>
        </authorList>
    </citation>
    <scope>PHOSPHORYLATION BY ATG1</scope>
</reference>
<reference key="33">
    <citation type="journal article" date="2011" name="EMBO J.">
        <title>Mitochondria regulate autophagy by conserved signalling pathways.</title>
        <authorList>
            <person name="Graef M."/>
            <person name="Nunnari J."/>
        </authorList>
    </citation>
    <scope>FUNCTION</scope>
    <scope>PHOSPHORYLATION</scope>
    <scope>SUBCELLULAR LOCATION OF THE ATG1-ATG13 COMPLEX</scope>
</reference>
<reference key="34">
    <citation type="journal article" date="2011" name="Genetics">
        <title>Antagonistic interactions between the cAMP-dependent protein kinase and Tor signaling pathways modulate cell growth in Saccharomyces cerevisiae.</title>
        <authorList>
            <person name="Ramachandran V."/>
            <person name="Herman P.K."/>
        </authorList>
    </citation>
    <scope>PHOSPHORYLATION</scope>
    <scope>DEPHOSPHORYLATION</scope>
</reference>
<reference key="35">
    <citation type="journal article" date="2011" name="J. Biol. Chem.">
        <title>An Atg13 protein-mediated self-association of the Atg1 protein kinase is important for the induction of autophagy.</title>
        <authorList>
            <person name="Yeh Y.Y."/>
            <person name="Shah K.H."/>
            <person name="Herman P.K."/>
        </authorList>
    </citation>
    <scope>FUNCTION</scope>
    <scope>INTERACTION WITH ATG1</scope>
</reference>
<reference key="36">
    <citation type="journal article" date="2011" name="Mol. Biol. Cell">
        <title>Selective regulation of autophagy by the Iml1-Npr2-Npr3 complex in the absence of nitrogen starvation.</title>
        <authorList>
            <person name="Wu X."/>
            <person name="Tu B.P."/>
        </authorList>
    </citation>
    <scope>PHOSPHORYLATION</scope>
    <scope>DEPHOSPHORYLATION</scope>
</reference>
<reference key="37">
    <citation type="journal article" date="2012" name="Cell">
        <title>Architecture of the Atg17 complex as a scaffold for autophagosome biogenesis.</title>
        <authorList>
            <person name="Ragusa M.J."/>
            <person name="Stanley R.E."/>
            <person name="Hurley J.H."/>
        </authorList>
    </citation>
    <scope>INTERACTION WITH THE ATG17-ATG29-ATG31 COMPLEX</scope>
</reference>
<reference key="38">
    <citation type="journal article" date="2012" name="EMBO J.">
        <title>Binding of the Atg1/ULK1 kinase to the ubiquitin-like protein Atg8 regulates autophagy.</title>
        <authorList>
            <person name="Kraft C."/>
            <person name="Kijanska M."/>
            <person name="Kalie E."/>
            <person name="Siergiejuk E."/>
            <person name="Lee S.S."/>
            <person name="Semplicio G."/>
            <person name="Stoffel I."/>
            <person name="Brezovich A."/>
            <person name="Verma M."/>
            <person name="Hansmann I."/>
            <person name="Ammerer G."/>
            <person name="Hofmann K."/>
            <person name="Tooze S."/>
            <person name="Peter M."/>
        </authorList>
    </citation>
    <scope>FUNCTION</scope>
    <scope>INTERACTION WITH ATG1</scope>
    <scope>MUTAGENESIS OF PHE-468 AND VAL-469</scope>
</reference>
<reference key="39">
    <citation type="journal article" date="2012" name="J. Biol. Chem.">
        <title>Ksp1 kinase regulates autophagy via the target of rapamycin complex 1 (TORC1) pathway.</title>
        <authorList>
            <person name="Umekawa M."/>
            <person name="Klionsky D.J."/>
        </authorList>
    </citation>
    <scope>FUNCTION</scope>
    <scope>PHOSPHORYLATION BY TORC1 COMPLEX</scope>
</reference>
<reference key="40">
    <citation type="journal article" date="2012" name="J. Biol. Chem.">
        <title>The autophagy-related protein kinase Atg1 interacts with the ubiquitin-like protein Atg8 via the Atg8 family interacting motif to facilitate autophagosome formation.</title>
        <authorList>
            <person name="Nakatogawa H."/>
            <person name="Ohbayashi S."/>
            <person name="Sakoh-Nakatogawa M."/>
            <person name="Kakuta S."/>
            <person name="Suzuki S.W."/>
            <person name="Kirisako H."/>
            <person name="Kondo-Kakuta C."/>
            <person name="Noda N.N."/>
            <person name="Yamamoto H."/>
            <person name="Ohsumi Y."/>
        </authorList>
    </citation>
    <scope>FUNCTION</scope>
    <scope>INTERACTION WITH ATG1</scope>
</reference>
<reference key="41">
    <citation type="journal article" date="2012" name="J. Biol. Chem.">
        <title>The protein factor-arrest 11 (Far11) is essential for the toxicity of human caspase-10 in yeast and participates in the regulation of autophagy and the DNA damage signaling.</title>
        <authorList>
            <person name="Lisa-Santamaria P."/>
            <person name="Jimenez A."/>
            <person name="Revuelta J.L."/>
        </authorList>
    </citation>
    <scope>FUNCTION</scope>
    <scope>PHOSPHORYLATION</scope>
</reference>
<reference key="42">
    <citation type="journal article" date="2012" name="Mol. Cell">
        <title>Transient sequestration of TORC1 into stress granules during heat stress.</title>
        <authorList>
            <person name="Takahara T."/>
            <person name="Maeda T."/>
        </authorList>
    </citation>
    <scope>PHOSPHORYLATION</scope>
</reference>
<reference key="43">
    <citation type="journal article" date="2018" name="PLoS Genet.">
        <title>Gtr/Ego-independent TORC1 activation is achieved through a glutamine-sensitive interaction with Pib2 on the vacuolar membrane.</title>
        <authorList>
            <person name="Ukai H."/>
            <person name="Araki Y."/>
            <person name="Kira S."/>
            <person name="Oikawa Y."/>
            <person name="May A.I."/>
            <person name="Noda T."/>
        </authorList>
    </citation>
    <scope>PHOSPHORYLATION</scope>
</reference>
<reference key="44">
    <citation type="journal article" date="2019" name="Proc. Natl. Acad. Sci. U.S.A.">
        <title>PP2C phosphatases promote autophagy by dephosphorylation of the Atg1 complex.</title>
        <authorList>
            <person name="Memisoglu G."/>
            <person name="Eapen V.V."/>
            <person name="Yang Y."/>
            <person name="Klionsky D.J."/>
            <person name="Haber J.E."/>
        </authorList>
    </citation>
    <scope>INTERACTION WITH ATG17; PTC2 AND PTC3</scope>
</reference>
<reference key="45">
    <citation type="journal article" date="2023" name="Autophagy">
        <title>Upstream open reading frames mediate autophagy-related protein translation.</title>
        <authorList>
            <person name="Yang Y."/>
            <person name="Gatica D."/>
            <person name="Liu X."/>
            <person name="Wu R."/>
            <person name="Kang R."/>
            <person name="Tang D."/>
            <person name="Klionsky D.J."/>
        </authorList>
    </citation>
    <scope>INDUCTION</scope>
</reference>
<reference evidence="41 42" key="46">
    <citation type="journal article" date="2020" name="Autophagy">
        <title>Quaternary structures of Vac8 differentially regulate the Cvt and PMN pathways.</title>
        <authorList>
            <person name="Park J."/>
            <person name="Kim H.I."/>
            <person name="Jeong H."/>
            <person name="Lee M."/>
            <person name="Jang S.H."/>
            <person name="Yoon S.Y."/>
            <person name="Kim H."/>
            <person name="Park Z.Y."/>
            <person name="Jun Y."/>
            <person name="Lee C."/>
        </authorList>
    </citation>
    <scope>X-RAY CRYSTALLOGRAPHY (2.90 ANGSTROMS) OF 567-695 IN COMPLEX WITH VA8</scope>
    <scope>FUNCTION</scope>
    <scope>INTERACTION WITH ATG13</scope>
    <scope>DOMAIN</scope>
</reference>
<name>ATG13_YEAST</name>
<gene>
    <name type="primary">ATG13</name>
    <name type="synonym">APG13</name>
    <name type="ordered locus">YPR185W</name>
</gene>
<accession>Q06628</accession>
<accession>D6W4I5</accession>
<comment type="function">
    <text evidence="2 3 4 5 8 9 11 12 13 14 15 18 19 20 21 22 25 27 29 31 32 33 37 39">Activates the ATG1 kinase in a nutritional condition dependent manner through the TOR pathway, leading to autophagy (PubMed:10995454, PubMed:11086004, PubMed:15743910, PubMed:17295840, PubMed:18077553, PubMed:18287526, PubMed:19805182, PubMed:19995911, PubMed:20647741, PubMed:20855505, PubMed:21468027, PubMed:22447937, PubMed:22778255, PubMed:22782902, PubMed:22885598, PubMed:8224160). Required for autophosphorylation of ATG1 at 'Thr-226' and its dimerization (PubMed:17699586, PubMed:20439775, PubMed:21712380). May also be involved in the regulation of autophagy through SNF1 (PubMed:11486014). Involved in ATG9 and ATG23 cycling through the pre-autophagosomal structure (PubMed:14723849, PubMed:17426440). Also involved in cytoplasm to vacuole transport (Cvt) and more specifically in Cvt vesicle formation (PubMed:10837477). Seems to play a role in the switching machinery regulating the conversion between the Cvt pathway and autophagy (PubMed:10837477, PubMed:31512555). Finally, ATG13 is also required for glycogen storage during stationary phase (PubMed:11486014).</text>
</comment>
<comment type="subunit">
    <text evidence="2 3 9 10 16 17 18 20 23 27 31 33 34 36 37">Hypophosphorylated form interacts with ATG1 to form the ATG1-ATG13 kinase complex (PubMed:10995454, PubMed:15743910, PubMed:15901835, PubMed:18829864, PubMed:20439775, PubMed:20953146, PubMed:21712380, PubMed:22778255, PubMed:22885598). The ATG1-ATG13 complex interacts with the ATG17-ATG29-ATG31 complex through direct interaction with ATG17 (PubMed:15743910, PubMed:15901835, PubMed:19755117, PubMed:19805182, PubMed:23219485, PubMed:30655342). The ATG17-ATG29-ATG31 and ATG1-ATG13 supercomplex interacts with the PP2C phosphatases PTC2 and PTC3; to regulate induction of autophagy (PubMed:30655342). Interacts with VAC8 and forms heterotetramers of two VAC8 and two ATG13 (PubMed:10837477, PubMed:31512555).</text>
</comment>
<comment type="interaction">
    <interactant intactId="EBI-36188">
        <id>Q06628</id>
    </interactant>
    <interactant intactId="EBI-2657">
        <id>P53104</id>
        <label>ATG1</label>
    </interactant>
    <organismsDiffer>false</organismsDiffer>
    <experiments>18</experiments>
</comment>
<comment type="interaction">
    <interactant intactId="EBI-36188">
        <id>Q06628</id>
    </interactant>
    <interactant intactId="EBI-30856">
        <id>Q06410</id>
        <label>ATG17</label>
    </interactant>
    <organismsDiffer>false</organismsDiffer>
    <experiments>6</experiments>
</comment>
<comment type="interaction">
    <interactant intactId="EBI-36188">
        <id>Q06628</id>
    </interactant>
    <interactant intactId="EBI-20212">
        <id>P39968</id>
        <label>VAC8</label>
    </interactant>
    <organismsDiffer>false</organismsDiffer>
    <experiments>7</experiments>
</comment>
<comment type="subcellular location">
    <subcellularLocation>
        <location evidence="6">Cytoplasm</location>
    </subcellularLocation>
    <subcellularLocation>
        <location evidence="11 25">Preautophagosomal structure</location>
    </subcellularLocation>
</comment>
<comment type="induction">
    <text evidence="38">Translation is induced by nitrogen starvation. Translational repression during nutrient-rich conditions is dependent on a uORF (upstream open reading frame) present in the 5'-UTR of the mRNA; it promotes ribosome dissociation. Translational induction occurs in conditions reducing translation machinery efficiency, leading to ribosomes scanning over the uORF (leaky-scanning), and increased translation of the mRNA.</text>
</comment>
<comment type="domain">
    <text evidence="37">The extended 70 Angstroms-longloop of ATG13 specifically binds the highly conserved innergroove formed by the armadillo repeats of VAC8.</text>
</comment>
<comment type="PTM">
    <text evidence="2 3 13 18 19 24 25 26 28 29 30 32 35">Phosphorylated; hyperphosphorylated by the TORC1 kinase complex to repress the induction of autophagy in nutrient-replete conditions (PubMed:10995454, PubMed:19805182, PubMed:19995911, PubMed:22447937, PubMed:22727621, PubMed:29698392). Starvation and TOR inactivation results in ATG13 partial dephosphorylation leading to ATG1-binding (PubMed:10995454). Rephosphorylated by ATG1 during prolonged nitrogen starvation (PubMed:21490424). Also phosphorylated by PKA (PubMed:17699586, PubMed:19805182, PubMed:21078689). PKA phosphorylation regulates the association of ATG13 with the PAS (PubMed:21900499). Within this regulatory network, mitochondrial respiratory deficiency suppresses autophagic flux (PubMed:21468027). Hyperphosphorylation in rich medium is impaired in the absence of VAC8 (PubMed:10837477). Dephosphorylation is dependent on FAR11 (PubMed:22782902).</text>
</comment>
<comment type="miscellaneous">
    <text evidence="7">Present with 149 molecules/cell in log phase SD medium.</text>
</comment>
<comment type="similarity">
    <text evidence="40">Belongs to the ATG13 family. Fungi subfamily.</text>
</comment>